<comment type="function">
    <text evidence="1">Zinc phosphodiesterase, which displays some tRNA 3'-processing endonuclease activity. Probably involved in tRNA maturation, by removing a 3'-trailer from precursor tRNA.</text>
</comment>
<comment type="catalytic activity">
    <reaction evidence="1">
        <text>Endonucleolytic cleavage of RNA, removing extra 3' nucleotides from tRNA precursor, generating 3' termini of tRNAs. A 3'-hydroxy group is left at the tRNA terminus and a 5'-phosphoryl group is left at the trailer molecule.</text>
        <dbReference type="EC" id="3.1.26.11"/>
    </reaction>
</comment>
<comment type="cofactor">
    <cofactor evidence="1">
        <name>Zn(2+)</name>
        <dbReference type="ChEBI" id="CHEBI:29105"/>
    </cofactor>
    <text evidence="1">Binds 2 Zn(2+) ions.</text>
</comment>
<comment type="subunit">
    <text evidence="1">Homodimer.</text>
</comment>
<comment type="similarity">
    <text evidence="1">Belongs to the RNase Z family.</text>
</comment>
<name>RNZ_STAAR</name>
<gene>
    <name evidence="1" type="primary">rnz</name>
    <name type="ordered locus">SAR1581</name>
</gene>
<evidence type="ECO:0000255" key="1">
    <source>
        <dbReference type="HAMAP-Rule" id="MF_01818"/>
    </source>
</evidence>
<feature type="chain" id="PRO_0000155896" description="Ribonuclease Z">
    <location>
        <begin position="1"/>
        <end position="306"/>
    </location>
</feature>
<feature type="active site" description="Proton acceptor" evidence="1">
    <location>
        <position position="67"/>
    </location>
</feature>
<feature type="binding site" evidence="1">
    <location>
        <position position="63"/>
    </location>
    <ligand>
        <name>Zn(2+)</name>
        <dbReference type="ChEBI" id="CHEBI:29105"/>
        <label>1</label>
        <note>catalytic</note>
    </ligand>
</feature>
<feature type="binding site" evidence="1">
    <location>
        <position position="65"/>
    </location>
    <ligand>
        <name>Zn(2+)</name>
        <dbReference type="ChEBI" id="CHEBI:29105"/>
        <label>1</label>
        <note>catalytic</note>
    </ligand>
</feature>
<feature type="binding site" evidence="1">
    <location>
        <position position="67"/>
    </location>
    <ligand>
        <name>Zn(2+)</name>
        <dbReference type="ChEBI" id="CHEBI:29105"/>
        <label>2</label>
        <note>catalytic</note>
    </ligand>
</feature>
<feature type="binding site" evidence="1">
    <location>
        <position position="68"/>
    </location>
    <ligand>
        <name>Zn(2+)</name>
        <dbReference type="ChEBI" id="CHEBI:29105"/>
        <label>2</label>
        <note>catalytic</note>
    </ligand>
</feature>
<feature type="binding site" evidence="1">
    <location>
        <position position="141"/>
    </location>
    <ligand>
        <name>Zn(2+)</name>
        <dbReference type="ChEBI" id="CHEBI:29105"/>
        <label>1</label>
        <note>catalytic</note>
    </ligand>
</feature>
<feature type="binding site" evidence="1">
    <location>
        <position position="211"/>
    </location>
    <ligand>
        <name>Zn(2+)</name>
        <dbReference type="ChEBI" id="CHEBI:29105"/>
        <label>1</label>
        <note>catalytic</note>
    </ligand>
</feature>
<feature type="binding site" evidence="1">
    <location>
        <position position="211"/>
    </location>
    <ligand>
        <name>Zn(2+)</name>
        <dbReference type="ChEBI" id="CHEBI:29105"/>
        <label>2</label>
        <note>catalytic</note>
    </ligand>
</feature>
<feature type="binding site" evidence="1">
    <location>
        <position position="269"/>
    </location>
    <ligand>
        <name>Zn(2+)</name>
        <dbReference type="ChEBI" id="CHEBI:29105"/>
        <label>2</label>
        <note>catalytic</note>
    </ligand>
</feature>
<proteinExistence type="inferred from homology"/>
<dbReference type="EC" id="3.1.26.11" evidence="1"/>
<dbReference type="EMBL" id="BX571856">
    <property type="protein sequence ID" value="CAG40576.1"/>
    <property type="molecule type" value="Genomic_DNA"/>
</dbReference>
<dbReference type="RefSeq" id="WP_000454059.1">
    <property type="nucleotide sequence ID" value="NC_002952.2"/>
</dbReference>
<dbReference type="SMR" id="Q6GGJ4"/>
<dbReference type="KEGG" id="sar:SAR1581"/>
<dbReference type="HOGENOM" id="CLU_031317_2_0_9"/>
<dbReference type="Proteomes" id="UP000000596">
    <property type="component" value="Chromosome"/>
</dbReference>
<dbReference type="GO" id="GO:0042781">
    <property type="term" value="F:3'-tRNA processing endoribonuclease activity"/>
    <property type="evidence" value="ECO:0007669"/>
    <property type="project" value="UniProtKB-UniRule"/>
</dbReference>
<dbReference type="GO" id="GO:0008270">
    <property type="term" value="F:zinc ion binding"/>
    <property type="evidence" value="ECO:0007669"/>
    <property type="project" value="UniProtKB-UniRule"/>
</dbReference>
<dbReference type="CDD" id="cd07717">
    <property type="entry name" value="RNaseZ_ZiPD-like_MBL-fold"/>
    <property type="match status" value="1"/>
</dbReference>
<dbReference type="FunFam" id="3.60.15.10:FF:000002">
    <property type="entry name" value="Ribonuclease Z"/>
    <property type="match status" value="1"/>
</dbReference>
<dbReference type="Gene3D" id="3.60.15.10">
    <property type="entry name" value="Ribonuclease Z/Hydroxyacylglutathione hydrolase-like"/>
    <property type="match status" value="1"/>
</dbReference>
<dbReference type="HAMAP" id="MF_01818">
    <property type="entry name" value="RNase_Z_BN"/>
    <property type="match status" value="1"/>
</dbReference>
<dbReference type="InterPro" id="IPR036866">
    <property type="entry name" value="RibonucZ/Hydroxyglut_hydro"/>
</dbReference>
<dbReference type="InterPro" id="IPR013471">
    <property type="entry name" value="RNase_Z/BN"/>
</dbReference>
<dbReference type="InterPro" id="IPR027794">
    <property type="entry name" value="tRNase_Z_dom"/>
</dbReference>
<dbReference type="NCBIfam" id="NF000801">
    <property type="entry name" value="PRK00055.1-3"/>
    <property type="match status" value="1"/>
</dbReference>
<dbReference type="NCBIfam" id="TIGR02651">
    <property type="entry name" value="RNase_Z"/>
    <property type="match status" value="1"/>
</dbReference>
<dbReference type="PANTHER" id="PTHR46018">
    <property type="entry name" value="ZINC PHOSPHODIESTERASE ELAC PROTEIN 1"/>
    <property type="match status" value="1"/>
</dbReference>
<dbReference type="PANTHER" id="PTHR46018:SF2">
    <property type="entry name" value="ZINC PHOSPHODIESTERASE ELAC PROTEIN 1"/>
    <property type="match status" value="1"/>
</dbReference>
<dbReference type="Pfam" id="PF13691">
    <property type="entry name" value="Lactamase_B_4"/>
    <property type="match status" value="1"/>
</dbReference>
<dbReference type="SUPFAM" id="SSF56281">
    <property type="entry name" value="Metallo-hydrolase/oxidoreductase"/>
    <property type="match status" value="1"/>
</dbReference>
<accession>Q6GGJ4</accession>
<protein>
    <recommendedName>
        <fullName evidence="1">Ribonuclease Z</fullName>
        <shortName evidence="1">RNase Z</shortName>
        <ecNumber evidence="1">3.1.26.11</ecNumber>
    </recommendedName>
    <alternativeName>
        <fullName evidence="1">tRNA 3 endonuclease</fullName>
    </alternativeName>
    <alternativeName>
        <fullName evidence="1">tRNase Z</fullName>
    </alternativeName>
</protein>
<sequence>MEVTFFGTSAGLPTKERNTQAIALNLEPYSNSIWLFDVGEGTQHQILHHAIKLGKVTHIFITHMHGDHIFGLPGLLSSRSFQGGEQKPLTLVGPKGIKAYVEMSMNLSESHLNYPITYIEIDDHLTYHHDGFTVEAHLLNHGIPSYGYRVMAPETTGTINVEALKNIGLEPGPKYQEVKSHDTFEHNGQVYQSKDFRGESKQGPIVAIFGDTKPCSNERVISRDADVMVHEATYIDGEKHLANNYHHSHIEDVFALIKEANVKRTLITHLSNRYNTEDINEIYQTLIQNEDTPNFNFVKDFDSFKI</sequence>
<reference key="1">
    <citation type="journal article" date="2004" name="Proc. Natl. Acad. Sci. U.S.A.">
        <title>Complete genomes of two clinical Staphylococcus aureus strains: evidence for the rapid evolution of virulence and drug resistance.</title>
        <authorList>
            <person name="Holden M.T.G."/>
            <person name="Feil E.J."/>
            <person name="Lindsay J.A."/>
            <person name="Peacock S.J."/>
            <person name="Day N.P.J."/>
            <person name="Enright M.C."/>
            <person name="Foster T.J."/>
            <person name="Moore C.E."/>
            <person name="Hurst L."/>
            <person name="Atkin R."/>
            <person name="Barron A."/>
            <person name="Bason N."/>
            <person name="Bentley S.D."/>
            <person name="Chillingworth C."/>
            <person name="Chillingworth T."/>
            <person name="Churcher C."/>
            <person name="Clark L."/>
            <person name="Corton C."/>
            <person name="Cronin A."/>
            <person name="Doggett J."/>
            <person name="Dowd L."/>
            <person name="Feltwell T."/>
            <person name="Hance Z."/>
            <person name="Harris B."/>
            <person name="Hauser H."/>
            <person name="Holroyd S."/>
            <person name="Jagels K."/>
            <person name="James K.D."/>
            <person name="Lennard N."/>
            <person name="Line A."/>
            <person name="Mayes R."/>
            <person name="Moule S."/>
            <person name="Mungall K."/>
            <person name="Ormond D."/>
            <person name="Quail M.A."/>
            <person name="Rabbinowitsch E."/>
            <person name="Rutherford K.M."/>
            <person name="Sanders M."/>
            <person name="Sharp S."/>
            <person name="Simmonds M."/>
            <person name="Stevens K."/>
            <person name="Whitehead S."/>
            <person name="Barrell B.G."/>
            <person name="Spratt B.G."/>
            <person name="Parkhill J."/>
        </authorList>
    </citation>
    <scope>NUCLEOTIDE SEQUENCE [LARGE SCALE GENOMIC DNA]</scope>
    <source>
        <strain>MRSA252</strain>
    </source>
</reference>
<keyword id="KW-0255">Endonuclease</keyword>
<keyword id="KW-0378">Hydrolase</keyword>
<keyword id="KW-0479">Metal-binding</keyword>
<keyword id="KW-0540">Nuclease</keyword>
<keyword id="KW-0819">tRNA processing</keyword>
<keyword id="KW-0862">Zinc</keyword>
<organism>
    <name type="scientific">Staphylococcus aureus (strain MRSA252)</name>
    <dbReference type="NCBI Taxonomy" id="282458"/>
    <lineage>
        <taxon>Bacteria</taxon>
        <taxon>Bacillati</taxon>
        <taxon>Bacillota</taxon>
        <taxon>Bacilli</taxon>
        <taxon>Bacillales</taxon>
        <taxon>Staphylococcaceae</taxon>
        <taxon>Staphylococcus</taxon>
    </lineage>
</organism>